<evidence type="ECO:0000255" key="1">
    <source>
        <dbReference type="HAMAP-Rule" id="MF_00451"/>
    </source>
</evidence>
<evidence type="ECO:0000305" key="2"/>
<reference key="1">
    <citation type="journal article" date="1996" name="DNA Res.">
        <title>Sequence analysis of the genome of the unicellular cyanobacterium Synechocystis sp. strain PCC6803. II. Sequence determination of the entire genome and assignment of potential protein-coding regions.</title>
        <authorList>
            <person name="Kaneko T."/>
            <person name="Sato S."/>
            <person name="Kotani H."/>
            <person name="Tanaka A."/>
            <person name="Asamizu E."/>
            <person name="Nakamura Y."/>
            <person name="Miyajima N."/>
            <person name="Hirosawa M."/>
            <person name="Sugiura M."/>
            <person name="Sasamoto S."/>
            <person name="Kimura T."/>
            <person name="Hosouchi T."/>
            <person name="Matsuno A."/>
            <person name="Muraki A."/>
            <person name="Nakazaki N."/>
            <person name="Naruo K."/>
            <person name="Okumura S."/>
            <person name="Shimpo S."/>
            <person name="Takeuchi C."/>
            <person name="Wada T."/>
            <person name="Watanabe A."/>
            <person name="Yamada M."/>
            <person name="Yasuda M."/>
            <person name="Tabata S."/>
        </authorList>
    </citation>
    <scope>NUCLEOTIDE SEQUENCE [LARGE SCALE GENOMIC DNA]</scope>
    <source>
        <strain>ATCC 27184 / PCC 6803 / Kazusa</strain>
    </source>
</reference>
<reference key="2">
    <citation type="journal article" date="1997" name="Electrophoresis">
        <title>Towards a proteome project of cyanobacterium Synechocystis sp. strain PCC6803: linking 130 protein spots with their respective genes.</title>
        <authorList>
            <person name="Sazuka T."/>
            <person name="Ohara O."/>
        </authorList>
    </citation>
    <scope>PROTEIN SEQUENCE OF 1-19</scope>
</reference>
<accession>P74494</accession>
<feature type="chain" id="PRO_0000137065" description="Nucleoside diphosphate kinase">
    <location>
        <begin position="1"/>
        <end position="149"/>
    </location>
</feature>
<feature type="active site" description="Pros-phosphohistidine intermediate" evidence="1">
    <location>
        <position position="115"/>
    </location>
</feature>
<feature type="binding site" evidence="1">
    <location>
        <position position="9"/>
    </location>
    <ligand>
        <name>ATP</name>
        <dbReference type="ChEBI" id="CHEBI:30616"/>
    </ligand>
</feature>
<feature type="binding site" evidence="1">
    <location>
        <position position="57"/>
    </location>
    <ligand>
        <name>ATP</name>
        <dbReference type="ChEBI" id="CHEBI:30616"/>
    </ligand>
</feature>
<feature type="binding site" evidence="1">
    <location>
        <position position="85"/>
    </location>
    <ligand>
        <name>ATP</name>
        <dbReference type="ChEBI" id="CHEBI:30616"/>
    </ligand>
</feature>
<feature type="binding site" evidence="1">
    <location>
        <position position="91"/>
    </location>
    <ligand>
        <name>ATP</name>
        <dbReference type="ChEBI" id="CHEBI:30616"/>
    </ligand>
</feature>
<feature type="binding site" evidence="1">
    <location>
        <position position="102"/>
    </location>
    <ligand>
        <name>ATP</name>
        <dbReference type="ChEBI" id="CHEBI:30616"/>
    </ligand>
</feature>
<feature type="binding site" evidence="1">
    <location>
        <position position="112"/>
    </location>
    <ligand>
        <name>ATP</name>
        <dbReference type="ChEBI" id="CHEBI:30616"/>
    </ligand>
</feature>
<keyword id="KW-0067">ATP-binding</keyword>
<keyword id="KW-0963">Cytoplasm</keyword>
<keyword id="KW-0903">Direct protein sequencing</keyword>
<keyword id="KW-0418">Kinase</keyword>
<keyword id="KW-0460">Magnesium</keyword>
<keyword id="KW-0479">Metal-binding</keyword>
<keyword id="KW-0546">Nucleotide metabolism</keyword>
<keyword id="KW-0547">Nucleotide-binding</keyword>
<keyword id="KW-0597">Phosphoprotein</keyword>
<keyword id="KW-1185">Reference proteome</keyword>
<keyword id="KW-0808">Transferase</keyword>
<protein>
    <recommendedName>
        <fullName evidence="1">Nucleoside diphosphate kinase</fullName>
        <shortName evidence="1">NDK</shortName>
        <shortName evidence="1">NDP kinase</shortName>
        <ecNumber evidence="1">2.7.4.6</ecNumber>
    </recommendedName>
    <alternativeName>
        <fullName evidence="1">Nucleoside-2-P kinase</fullName>
    </alternativeName>
</protein>
<proteinExistence type="evidence at protein level"/>
<name>NDK_SYNY3</name>
<organism>
    <name type="scientific">Synechocystis sp. (strain ATCC 27184 / PCC 6803 / Kazusa)</name>
    <dbReference type="NCBI Taxonomy" id="1111708"/>
    <lineage>
        <taxon>Bacteria</taxon>
        <taxon>Bacillati</taxon>
        <taxon>Cyanobacteriota</taxon>
        <taxon>Cyanophyceae</taxon>
        <taxon>Synechococcales</taxon>
        <taxon>Merismopediaceae</taxon>
        <taxon>Synechocystis</taxon>
    </lineage>
</organism>
<dbReference type="EC" id="2.7.4.6" evidence="1"/>
<dbReference type="EMBL" id="BA000022">
    <property type="protein sequence ID" value="BAA18596.1"/>
    <property type="molecule type" value="Genomic_DNA"/>
</dbReference>
<dbReference type="PIR" id="S76467">
    <property type="entry name" value="S76467"/>
</dbReference>
<dbReference type="SMR" id="P74494"/>
<dbReference type="FunCoup" id="P74494">
    <property type="interactions" value="422"/>
</dbReference>
<dbReference type="STRING" id="1148.gene:10499478"/>
<dbReference type="PaxDb" id="1148-1653684"/>
<dbReference type="EnsemblBacteria" id="BAA18596">
    <property type="protein sequence ID" value="BAA18596"/>
    <property type="gene ID" value="BAA18596"/>
</dbReference>
<dbReference type="KEGG" id="syn:sll1852"/>
<dbReference type="eggNOG" id="COG0105">
    <property type="taxonomic scope" value="Bacteria"/>
</dbReference>
<dbReference type="InParanoid" id="P74494"/>
<dbReference type="PhylomeDB" id="P74494"/>
<dbReference type="Proteomes" id="UP000001425">
    <property type="component" value="Chromosome"/>
</dbReference>
<dbReference type="GO" id="GO:0005737">
    <property type="term" value="C:cytoplasm"/>
    <property type="evidence" value="ECO:0007669"/>
    <property type="project" value="UniProtKB-SubCell"/>
</dbReference>
<dbReference type="GO" id="GO:0005524">
    <property type="term" value="F:ATP binding"/>
    <property type="evidence" value="ECO:0007669"/>
    <property type="project" value="UniProtKB-UniRule"/>
</dbReference>
<dbReference type="GO" id="GO:0046872">
    <property type="term" value="F:metal ion binding"/>
    <property type="evidence" value="ECO:0007669"/>
    <property type="project" value="UniProtKB-KW"/>
</dbReference>
<dbReference type="GO" id="GO:0004550">
    <property type="term" value="F:nucleoside diphosphate kinase activity"/>
    <property type="evidence" value="ECO:0007669"/>
    <property type="project" value="UniProtKB-UniRule"/>
</dbReference>
<dbReference type="GO" id="GO:0006241">
    <property type="term" value="P:CTP biosynthetic process"/>
    <property type="evidence" value="ECO:0007669"/>
    <property type="project" value="UniProtKB-UniRule"/>
</dbReference>
<dbReference type="GO" id="GO:0006183">
    <property type="term" value="P:GTP biosynthetic process"/>
    <property type="evidence" value="ECO:0007669"/>
    <property type="project" value="UniProtKB-UniRule"/>
</dbReference>
<dbReference type="GO" id="GO:0006228">
    <property type="term" value="P:UTP biosynthetic process"/>
    <property type="evidence" value="ECO:0007669"/>
    <property type="project" value="UniProtKB-UniRule"/>
</dbReference>
<dbReference type="CDD" id="cd04413">
    <property type="entry name" value="NDPk_I"/>
    <property type="match status" value="1"/>
</dbReference>
<dbReference type="FunFam" id="3.30.70.141:FF:000005">
    <property type="entry name" value="Nucleoside diphosphate kinase"/>
    <property type="match status" value="1"/>
</dbReference>
<dbReference type="Gene3D" id="3.30.70.141">
    <property type="entry name" value="Nucleoside diphosphate kinase-like domain"/>
    <property type="match status" value="1"/>
</dbReference>
<dbReference type="HAMAP" id="MF_00451">
    <property type="entry name" value="NDP_kinase"/>
    <property type="match status" value="1"/>
</dbReference>
<dbReference type="InterPro" id="IPR034907">
    <property type="entry name" value="NDK-like_dom"/>
</dbReference>
<dbReference type="InterPro" id="IPR036850">
    <property type="entry name" value="NDK-like_dom_sf"/>
</dbReference>
<dbReference type="InterPro" id="IPR001564">
    <property type="entry name" value="Nucleoside_diP_kinase"/>
</dbReference>
<dbReference type="InterPro" id="IPR023005">
    <property type="entry name" value="Nucleoside_diP_kinase_AS"/>
</dbReference>
<dbReference type="NCBIfam" id="NF001908">
    <property type="entry name" value="PRK00668.1"/>
    <property type="match status" value="1"/>
</dbReference>
<dbReference type="PANTHER" id="PTHR11349">
    <property type="entry name" value="NUCLEOSIDE DIPHOSPHATE KINASE"/>
    <property type="match status" value="1"/>
</dbReference>
<dbReference type="Pfam" id="PF00334">
    <property type="entry name" value="NDK"/>
    <property type="match status" value="1"/>
</dbReference>
<dbReference type="PRINTS" id="PR01243">
    <property type="entry name" value="NUCDPKINASE"/>
</dbReference>
<dbReference type="SMART" id="SM00562">
    <property type="entry name" value="NDK"/>
    <property type="match status" value="1"/>
</dbReference>
<dbReference type="SUPFAM" id="SSF54919">
    <property type="entry name" value="Nucleoside diphosphate kinase, NDK"/>
    <property type="match status" value="1"/>
</dbReference>
<dbReference type="PROSITE" id="PS00469">
    <property type="entry name" value="NDPK"/>
    <property type="match status" value="1"/>
</dbReference>
<dbReference type="PROSITE" id="PS51374">
    <property type="entry name" value="NDPK_LIKE"/>
    <property type="match status" value="1"/>
</dbReference>
<sequence>MERTFIMIKPDGVQRQLIGEIVGRFEKKGFKLVAMKVMTVSQELAEKHYEALNDKPFFSGLVNFICSSPVVAMVWEGNSIVSTSRQMIGATDPHAAAPGTIRGDYGVSVGRNIIHGSDAIETAKREISLWFKDEEVNEWDATLNPWLYE</sequence>
<gene>
    <name evidence="1" type="primary">ndk</name>
    <name type="synonym">ndkR</name>
    <name type="ordered locus">sll1852</name>
</gene>
<comment type="function">
    <text evidence="1">Major role in the synthesis of nucleoside triphosphates other than ATP. The ATP gamma phosphate is transferred to the NDP beta phosphate via a ping-pong mechanism, using a phosphorylated active-site intermediate.</text>
</comment>
<comment type="catalytic activity">
    <reaction evidence="1">
        <text>a 2'-deoxyribonucleoside 5'-diphosphate + ATP = a 2'-deoxyribonucleoside 5'-triphosphate + ADP</text>
        <dbReference type="Rhea" id="RHEA:44640"/>
        <dbReference type="ChEBI" id="CHEBI:30616"/>
        <dbReference type="ChEBI" id="CHEBI:61560"/>
        <dbReference type="ChEBI" id="CHEBI:73316"/>
        <dbReference type="ChEBI" id="CHEBI:456216"/>
        <dbReference type="EC" id="2.7.4.6"/>
    </reaction>
</comment>
<comment type="catalytic activity">
    <reaction evidence="1">
        <text>a ribonucleoside 5'-diphosphate + ATP = a ribonucleoside 5'-triphosphate + ADP</text>
        <dbReference type="Rhea" id="RHEA:18113"/>
        <dbReference type="ChEBI" id="CHEBI:30616"/>
        <dbReference type="ChEBI" id="CHEBI:57930"/>
        <dbReference type="ChEBI" id="CHEBI:61557"/>
        <dbReference type="ChEBI" id="CHEBI:456216"/>
        <dbReference type="EC" id="2.7.4.6"/>
    </reaction>
</comment>
<comment type="cofactor">
    <cofactor evidence="1">
        <name>Mg(2+)</name>
        <dbReference type="ChEBI" id="CHEBI:18420"/>
    </cofactor>
</comment>
<comment type="subunit">
    <text evidence="1">Homotetramer.</text>
</comment>
<comment type="subcellular location">
    <subcellularLocation>
        <location evidence="1">Cytoplasm</location>
    </subcellularLocation>
</comment>
<comment type="similarity">
    <text evidence="1 2">Belongs to the NDK family.</text>
</comment>